<evidence type="ECO:0000255" key="1">
    <source>
        <dbReference type="HAMAP-Rule" id="MF_00203"/>
    </source>
</evidence>
<dbReference type="EMBL" id="CR626927">
    <property type="protein sequence ID" value="CAH05889.1"/>
    <property type="molecule type" value="Genomic_DNA"/>
</dbReference>
<dbReference type="RefSeq" id="WP_005783702.1">
    <property type="nucleotide sequence ID" value="NZ_UFTH01000001.1"/>
</dbReference>
<dbReference type="SMR" id="Q5LIY7"/>
<dbReference type="PaxDb" id="272559-BF9343_0110"/>
<dbReference type="GeneID" id="60368793"/>
<dbReference type="KEGG" id="bfs:BF9343_0110"/>
<dbReference type="eggNOG" id="COG0322">
    <property type="taxonomic scope" value="Bacteria"/>
</dbReference>
<dbReference type="HOGENOM" id="CLU_014841_3_2_10"/>
<dbReference type="Proteomes" id="UP000006731">
    <property type="component" value="Chromosome"/>
</dbReference>
<dbReference type="GO" id="GO:0005737">
    <property type="term" value="C:cytoplasm"/>
    <property type="evidence" value="ECO:0007669"/>
    <property type="project" value="UniProtKB-SubCell"/>
</dbReference>
<dbReference type="GO" id="GO:0009380">
    <property type="term" value="C:excinuclease repair complex"/>
    <property type="evidence" value="ECO:0007669"/>
    <property type="project" value="InterPro"/>
</dbReference>
<dbReference type="GO" id="GO:0003677">
    <property type="term" value="F:DNA binding"/>
    <property type="evidence" value="ECO:0007669"/>
    <property type="project" value="UniProtKB-UniRule"/>
</dbReference>
<dbReference type="GO" id="GO:0009381">
    <property type="term" value="F:excinuclease ABC activity"/>
    <property type="evidence" value="ECO:0007669"/>
    <property type="project" value="UniProtKB-UniRule"/>
</dbReference>
<dbReference type="GO" id="GO:0006289">
    <property type="term" value="P:nucleotide-excision repair"/>
    <property type="evidence" value="ECO:0007669"/>
    <property type="project" value="UniProtKB-UniRule"/>
</dbReference>
<dbReference type="GO" id="GO:0009432">
    <property type="term" value="P:SOS response"/>
    <property type="evidence" value="ECO:0007669"/>
    <property type="project" value="UniProtKB-UniRule"/>
</dbReference>
<dbReference type="CDD" id="cd10434">
    <property type="entry name" value="GIY-YIG_UvrC_Cho"/>
    <property type="match status" value="1"/>
</dbReference>
<dbReference type="FunFam" id="3.30.420.340:FF:000002">
    <property type="entry name" value="UvrABC system protein C"/>
    <property type="match status" value="1"/>
</dbReference>
<dbReference type="FunFam" id="3.40.1440.10:FF:000001">
    <property type="entry name" value="UvrABC system protein C"/>
    <property type="match status" value="1"/>
</dbReference>
<dbReference type="Gene3D" id="1.10.150.20">
    <property type="entry name" value="5' to 3' exonuclease, C-terminal subdomain"/>
    <property type="match status" value="1"/>
</dbReference>
<dbReference type="Gene3D" id="3.40.1440.10">
    <property type="entry name" value="GIY-YIG endonuclease"/>
    <property type="match status" value="1"/>
</dbReference>
<dbReference type="Gene3D" id="3.30.420.340">
    <property type="entry name" value="UvrC, RNAse H endonuclease domain"/>
    <property type="match status" value="1"/>
</dbReference>
<dbReference type="HAMAP" id="MF_00203">
    <property type="entry name" value="UvrC"/>
    <property type="match status" value="1"/>
</dbReference>
<dbReference type="InterPro" id="IPR000305">
    <property type="entry name" value="GIY-YIG_endonuc"/>
</dbReference>
<dbReference type="InterPro" id="IPR035901">
    <property type="entry name" value="GIY-YIG_endonuc_sf"/>
</dbReference>
<dbReference type="InterPro" id="IPR047296">
    <property type="entry name" value="GIY-YIG_UvrC_Cho"/>
</dbReference>
<dbReference type="InterPro" id="IPR010994">
    <property type="entry name" value="RuvA_2-like"/>
</dbReference>
<dbReference type="InterPro" id="IPR036876">
    <property type="entry name" value="UVR_dom_sf"/>
</dbReference>
<dbReference type="InterPro" id="IPR050066">
    <property type="entry name" value="UvrABC_protein_C"/>
</dbReference>
<dbReference type="InterPro" id="IPR004791">
    <property type="entry name" value="UvrC"/>
</dbReference>
<dbReference type="InterPro" id="IPR001162">
    <property type="entry name" value="UvrC_RNase_H_dom"/>
</dbReference>
<dbReference type="InterPro" id="IPR038476">
    <property type="entry name" value="UvrC_RNase_H_dom_sf"/>
</dbReference>
<dbReference type="NCBIfam" id="TIGR00194">
    <property type="entry name" value="uvrC"/>
    <property type="match status" value="1"/>
</dbReference>
<dbReference type="PANTHER" id="PTHR30562:SF1">
    <property type="entry name" value="UVRABC SYSTEM PROTEIN C"/>
    <property type="match status" value="1"/>
</dbReference>
<dbReference type="PANTHER" id="PTHR30562">
    <property type="entry name" value="UVRC/OXIDOREDUCTASE"/>
    <property type="match status" value="1"/>
</dbReference>
<dbReference type="Pfam" id="PF01541">
    <property type="entry name" value="GIY-YIG"/>
    <property type="match status" value="1"/>
</dbReference>
<dbReference type="Pfam" id="PF14520">
    <property type="entry name" value="HHH_5"/>
    <property type="match status" value="1"/>
</dbReference>
<dbReference type="Pfam" id="PF22920">
    <property type="entry name" value="UvrC_RNaseH"/>
    <property type="match status" value="1"/>
</dbReference>
<dbReference type="Pfam" id="PF08459">
    <property type="entry name" value="UvrC_RNaseH_dom"/>
    <property type="match status" value="1"/>
</dbReference>
<dbReference type="SMART" id="SM00465">
    <property type="entry name" value="GIYc"/>
    <property type="match status" value="1"/>
</dbReference>
<dbReference type="SUPFAM" id="SSF46600">
    <property type="entry name" value="C-terminal UvrC-binding domain of UvrB"/>
    <property type="match status" value="1"/>
</dbReference>
<dbReference type="SUPFAM" id="SSF82771">
    <property type="entry name" value="GIY-YIG endonuclease"/>
    <property type="match status" value="1"/>
</dbReference>
<dbReference type="SUPFAM" id="SSF47781">
    <property type="entry name" value="RuvA domain 2-like"/>
    <property type="match status" value="1"/>
</dbReference>
<dbReference type="PROSITE" id="PS50164">
    <property type="entry name" value="GIY_YIG"/>
    <property type="match status" value="1"/>
</dbReference>
<dbReference type="PROSITE" id="PS50165">
    <property type="entry name" value="UVRC"/>
    <property type="match status" value="1"/>
</dbReference>
<reference key="1">
    <citation type="journal article" date="2005" name="Science">
        <title>Extensive DNA inversions in the B. fragilis genome control variable gene expression.</title>
        <authorList>
            <person name="Cerdeno-Tarraga A.-M."/>
            <person name="Patrick S."/>
            <person name="Crossman L.C."/>
            <person name="Blakely G."/>
            <person name="Abratt V."/>
            <person name="Lennard N."/>
            <person name="Poxton I."/>
            <person name="Duerden B."/>
            <person name="Harris B."/>
            <person name="Quail M.A."/>
            <person name="Barron A."/>
            <person name="Clark L."/>
            <person name="Corton C."/>
            <person name="Doggett J."/>
            <person name="Holden M.T.G."/>
            <person name="Larke N."/>
            <person name="Line A."/>
            <person name="Lord A."/>
            <person name="Norbertczak H."/>
            <person name="Ormond D."/>
            <person name="Price C."/>
            <person name="Rabbinowitsch E."/>
            <person name="Woodward J."/>
            <person name="Barrell B.G."/>
            <person name="Parkhill J."/>
        </authorList>
    </citation>
    <scope>NUCLEOTIDE SEQUENCE [LARGE SCALE GENOMIC DNA]</scope>
    <source>
        <strain>ATCC 25285 / DSM 2151 / CCUG 4856 / JCM 11019 / LMG 10263 / NCTC 9343 / Onslow / VPI 2553 / EN-2</strain>
    </source>
</reference>
<gene>
    <name evidence="1" type="primary">uvrC</name>
    <name type="ordered locus">BF0111</name>
</gene>
<protein>
    <recommendedName>
        <fullName evidence="1">UvrABC system protein C</fullName>
        <shortName evidence="1">Protein UvrC</shortName>
    </recommendedName>
    <alternativeName>
        <fullName evidence="1">Excinuclease ABC subunit C</fullName>
    </alternativeName>
</protein>
<comment type="function">
    <text evidence="1">The UvrABC repair system catalyzes the recognition and processing of DNA lesions. UvrC both incises the 5' and 3' sides of the lesion. The N-terminal half is responsible for the 3' incision and the C-terminal half is responsible for the 5' incision.</text>
</comment>
<comment type="subunit">
    <text evidence="1">Interacts with UvrB in an incision complex.</text>
</comment>
<comment type="subcellular location">
    <subcellularLocation>
        <location evidence="1">Cytoplasm</location>
    </subcellularLocation>
</comment>
<comment type="similarity">
    <text evidence="1">Belongs to the UvrC family.</text>
</comment>
<proteinExistence type="inferred from homology"/>
<accession>Q5LIY7</accession>
<keyword id="KW-0963">Cytoplasm</keyword>
<keyword id="KW-0227">DNA damage</keyword>
<keyword id="KW-0228">DNA excision</keyword>
<keyword id="KW-0234">DNA repair</keyword>
<keyword id="KW-0267">Excision nuclease</keyword>
<keyword id="KW-0742">SOS response</keyword>
<name>UVRC_BACFN</name>
<sequence length="608" mass="70197">MDTNQELKTSEYLKGIVSNLPEKPGIYQYLNAEGTIIYVGKAKNLKRRVYSYFSKEHQPGKTRVLVSKIADIRYIVVNSEEDALLLENNLIKKYKPRYNVLLKDDKTYPSICVQNEYFPRVFKTRRIIRNGSSYYGPYSHSPSMHAVLDLIKHLYPLRTCNLNLSPENIRAGKFNVCLEYHIKNCAGPCIGLQSQEEYLKNIAEIKEILKGNTQEISRLLYQRMQDLAAEMKFEEAQKVKEKYALIENYRSKSEVVSSVLHNIDVFSIEEDGEKSAFINYLHITNGAINQAFTFEYKKKLNETKEELLTLGIIEMRERYKSASREIIVPFDIEIELNDVTFTIPQRGDKKKLLELSLLNVKQYKADRMKQAEKLNPEQRSMRLMKEIQQELHLDRLPMQIECFDNSNIQGTDAVAACVVFKKAKPSKSDYRKYNIKTVVGADDYASMKEVVRRRYQRAIEEESPLPDLIITDGGKGQMEVVRQVMEELQLDIPIAGLAKDRKHRTSEVLFGFPPQTIGIKQHSPLFRLLEQIQDEVHRFAITFHRDKRSKRQVASALDNIKGIGEKTKTALLKEFKSVKRIKEATIEEVSAIIGESKAKIIKEGLDNH</sequence>
<feature type="chain" id="PRO_0000227401" description="UvrABC system protein C">
    <location>
        <begin position="1"/>
        <end position="608"/>
    </location>
</feature>
<feature type="domain" description="GIY-YIG" evidence="1">
    <location>
        <begin position="22"/>
        <end position="100"/>
    </location>
</feature>
<feature type="domain" description="UVR" evidence="1">
    <location>
        <begin position="214"/>
        <end position="249"/>
    </location>
</feature>
<organism>
    <name type="scientific">Bacteroides fragilis (strain ATCC 25285 / DSM 2151 / CCUG 4856 / JCM 11019 / LMG 10263 / NCTC 9343 / Onslow / VPI 2553 / EN-2)</name>
    <dbReference type="NCBI Taxonomy" id="272559"/>
    <lineage>
        <taxon>Bacteria</taxon>
        <taxon>Pseudomonadati</taxon>
        <taxon>Bacteroidota</taxon>
        <taxon>Bacteroidia</taxon>
        <taxon>Bacteroidales</taxon>
        <taxon>Bacteroidaceae</taxon>
        <taxon>Bacteroides</taxon>
    </lineage>
</organism>